<sequence>MGDAPLPPGSGKEFTQVQQQHNNYSNHQQQHAFASQYDMTQQQQPFGRGLSGPYNMGLMMHALPHPSYRPGQQQQHQYGSPPNTNGNAQPMPQAHGNNTMNSMPGPPQYYMQQQHGLPPQYYAQQMQGSQQQQQHQRGSMSPRANMALYQQPHTQGQQYYYPQGAQFPNHGPMPQNSMLAGPYPLASHMQHVDHRLAQRQVGDQRDVDNTEQSQPRVDGARFESQSNVVRGPPRKPRQSGHAIWIGNLPPQTDLMSLVYHVCKEAPGLESLFLISKSNCAFANFKDEEACISAQQKIHDSKFQTVRLVSRLRKSTVEGATGLTAPTGPAASAPQSNISQEVKGDALSVVTTTEDLIASSNVSSPKVTSPAPVETDRSAPQKEKYFILKSLTVEDLEQSIKTGIWATQAHNEKALNKAYETAESVYLIFSANKSGEYFGYARMTSQINEDPAAAVEFAPKAQAASDVALPKAIPTEANEYMPKGSIMDDSERGTIFWEADPPEDADGVDSNDTTTAAVADDTVSIKSCETGGPDSKVWGKPFQIEWLSVARLPFYRTRGIRNPWNSNREVKIARDGTELEPSVGRKLTGLFTSRGVGQLQQQPHPHHHHVMGGGMPMPGGMVHGYPPMYAQ</sequence>
<keyword id="KW-0963">Cytoplasm</keyword>
<keyword id="KW-1185">Reference proteome</keyword>
<dbReference type="EMBL" id="CM001231">
    <property type="protein sequence ID" value="EHA58271.1"/>
    <property type="molecule type" value="Genomic_DNA"/>
</dbReference>
<dbReference type="RefSeq" id="XP_003710883.1">
    <property type="nucleotide sequence ID" value="XM_003710835.1"/>
</dbReference>
<dbReference type="SMR" id="G4MRQ6"/>
<dbReference type="STRING" id="242507.G4MRQ6"/>
<dbReference type="EnsemblFungi" id="MGG_04621T0">
    <property type="protein sequence ID" value="MGG_04621T0"/>
    <property type="gene ID" value="MGG_04621"/>
</dbReference>
<dbReference type="GeneID" id="2677937"/>
<dbReference type="KEGG" id="mgr:MGG_04621"/>
<dbReference type="VEuPathDB" id="FungiDB:MGG_04621"/>
<dbReference type="eggNOG" id="KOG1902">
    <property type="taxonomic scope" value="Eukaryota"/>
</dbReference>
<dbReference type="HOGENOM" id="CLU_011694_2_0_1"/>
<dbReference type="InParanoid" id="G4MRQ6"/>
<dbReference type="OMA" id="YKTEASC"/>
<dbReference type="OrthoDB" id="230742at2759"/>
<dbReference type="PHI-base" id="PHI:801"/>
<dbReference type="PHI-base" id="PHI:8650"/>
<dbReference type="Proteomes" id="UP000009058">
    <property type="component" value="Chromosome 1"/>
</dbReference>
<dbReference type="GO" id="GO:0005654">
    <property type="term" value="C:nucleoplasm"/>
    <property type="evidence" value="ECO:0007669"/>
    <property type="project" value="TreeGrafter"/>
</dbReference>
<dbReference type="GO" id="GO:0000932">
    <property type="term" value="C:P-body"/>
    <property type="evidence" value="ECO:0007669"/>
    <property type="project" value="UniProtKB-SubCell"/>
</dbReference>
<dbReference type="GO" id="GO:0003729">
    <property type="term" value="F:mRNA binding"/>
    <property type="evidence" value="ECO:0007669"/>
    <property type="project" value="TreeGrafter"/>
</dbReference>
<dbReference type="GO" id="GO:1990247">
    <property type="term" value="F:N6-methyladenosine-containing RNA reader activity"/>
    <property type="evidence" value="ECO:0007669"/>
    <property type="project" value="TreeGrafter"/>
</dbReference>
<dbReference type="GO" id="GO:0000398">
    <property type="term" value="P:mRNA splicing, via spliceosome"/>
    <property type="evidence" value="ECO:0007669"/>
    <property type="project" value="TreeGrafter"/>
</dbReference>
<dbReference type="GO" id="GO:0000381">
    <property type="term" value="P:regulation of alternative mRNA splicing, via spliceosome"/>
    <property type="evidence" value="ECO:0007669"/>
    <property type="project" value="TreeGrafter"/>
</dbReference>
<dbReference type="CDD" id="cd00590">
    <property type="entry name" value="RRM_SF"/>
    <property type="match status" value="1"/>
</dbReference>
<dbReference type="CDD" id="cd21134">
    <property type="entry name" value="YTH"/>
    <property type="match status" value="1"/>
</dbReference>
<dbReference type="Gene3D" id="3.30.70.330">
    <property type="match status" value="1"/>
</dbReference>
<dbReference type="Gene3D" id="3.10.590.10">
    <property type="entry name" value="ph1033 like domains"/>
    <property type="match status" value="1"/>
</dbReference>
<dbReference type="InterPro" id="IPR012677">
    <property type="entry name" value="Nucleotide-bd_a/b_plait_sf"/>
</dbReference>
<dbReference type="InterPro" id="IPR035979">
    <property type="entry name" value="RBD_domain_sf"/>
</dbReference>
<dbReference type="InterPro" id="IPR000504">
    <property type="entry name" value="RRM_dom"/>
</dbReference>
<dbReference type="InterPro" id="IPR007275">
    <property type="entry name" value="YTH_domain"/>
</dbReference>
<dbReference type="InterPro" id="IPR045168">
    <property type="entry name" value="YTH_prot"/>
</dbReference>
<dbReference type="PANTHER" id="PTHR12357:SF3">
    <property type="entry name" value="YTH DOMAIN-CONTAINING PROTEIN 1"/>
    <property type="match status" value="1"/>
</dbReference>
<dbReference type="PANTHER" id="PTHR12357">
    <property type="entry name" value="YTH YT521-B HOMOLOGY DOMAIN-CONTAINING"/>
    <property type="match status" value="1"/>
</dbReference>
<dbReference type="Pfam" id="PF04146">
    <property type="entry name" value="YTH"/>
    <property type="match status" value="1"/>
</dbReference>
<dbReference type="SMART" id="SM00360">
    <property type="entry name" value="RRM"/>
    <property type="match status" value="1"/>
</dbReference>
<dbReference type="SUPFAM" id="SSF54928">
    <property type="entry name" value="RNA-binding domain, RBD"/>
    <property type="match status" value="1"/>
</dbReference>
<dbReference type="PROSITE" id="PS50882">
    <property type="entry name" value="YTH"/>
    <property type="match status" value="1"/>
</dbReference>
<name>YTH1_PYRO7</name>
<protein>
    <recommendedName>
        <fullName evidence="5">YTH domain-containing family protein 1</fullName>
    </recommendedName>
    <alternativeName>
        <fullName evidence="6">M6A reader YTH1</fullName>
    </alternativeName>
</protein>
<gene>
    <name evidence="5" type="primary">YTH1</name>
    <name type="ORF">MGG_04621</name>
</gene>
<comment type="function">
    <text evidence="1 4">Specifically recognizes and binds N6-methyladenosine (m6A)-containing mRNAs, and regulates their stability (By similarity). M6A is a modification present at internal sites of mRNAs and some non-coding RNAs and plays a role in mRNA stability and processing (By similarity). Plays a role in pathogenicity towards plant host (PubMed:30535195).</text>
</comment>
<comment type="subcellular location">
    <subcellularLocation>
        <location evidence="4">Cytoplasm</location>
        <location evidence="4">P-body</location>
    </subcellularLocation>
</comment>
<comment type="disruption phenotype">
    <text evidence="4">Does not seem to affect growth nor conidiation (PubMed:30535195). Displays milder disease lesions on rice leaves (PubMed:30535195).</text>
</comment>
<comment type="similarity">
    <text evidence="6">Belongs to the YTHDF family. YTHDF1 subfamily.</text>
</comment>
<organism>
    <name type="scientific">Pyricularia oryzae (strain 70-15 / ATCC MYA-4617 / FGSC 8958)</name>
    <name type="common">Rice blast fungus</name>
    <name type="synonym">Magnaporthe oryzae</name>
    <dbReference type="NCBI Taxonomy" id="242507"/>
    <lineage>
        <taxon>Eukaryota</taxon>
        <taxon>Fungi</taxon>
        <taxon>Dikarya</taxon>
        <taxon>Ascomycota</taxon>
        <taxon>Pezizomycotina</taxon>
        <taxon>Sordariomycetes</taxon>
        <taxon>Sordariomycetidae</taxon>
        <taxon>Magnaporthales</taxon>
        <taxon>Pyriculariaceae</taxon>
        <taxon>Pyricularia</taxon>
    </lineage>
</organism>
<reference key="1">
    <citation type="journal article" date="2005" name="Nature">
        <title>The genome sequence of the rice blast fungus Magnaporthe grisea.</title>
        <authorList>
            <person name="Dean R.A."/>
            <person name="Talbot N.J."/>
            <person name="Ebbole D.J."/>
            <person name="Farman M.L."/>
            <person name="Mitchell T.K."/>
            <person name="Orbach M.J."/>
            <person name="Thon M.R."/>
            <person name="Kulkarni R."/>
            <person name="Xu J.-R."/>
            <person name="Pan H."/>
            <person name="Read N.D."/>
            <person name="Lee Y.-H."/>
            <person name="Carbone I."/>
            <person name="Brown D."/>
            <person name="Oh Y.Y."/>
            <person name="Donofrio N."/>
            <person name="Jeong J.S."/>
            <person name="Soanes D.M."/>
            <person name="Djonovic S."/>
            <person name="Kolomiets E."/>
            <person name="Rehmeyer C."/>
            <person name="Li W."/>
            <person name="Harding M."/>
            <person name="Kim S."/>
            <person name="Lebrun M.-H."/>
            <person name="Bohnert H."/>
            <person name="Coughlan S."/>
            <person name="Butler J."/>
            <person name="Calvo S.E."/>
            <person name="Ma L.-J."/>
            <person name="Nicol R."/>
            <person name="Purcell S."/>
            <person name="Nusbaum C."/>
            <person name="Galagan J.E."/>
            <person name="Birren B.W."/>
        </authorList>
    </citation>
    <scope>NUCLEOTIDE SEQUENCE [LARGE SCALE GENOMIC DNA]</scope>
    <source>
        <strain>70-15 / ATCC MYA-4617 / FGSC 8958</strain>
    </source>
</reference>
<reference key="2">
    <citation type="journal article" date="2019" name="FEMS Microbiol. Lett.">
        <title>N6-methyladenosine RNA methylation is involved in virulence of the rice blast fungus Pyricularia oryzae (syn. Magnaporthe oryzae).</title>
        <authorList>
            <person name="Shi Y."/>
            <person name="Wang H."/>
            <person name="Wang J."/>
            <person name="Liu X."/>
            <person name="Lin F."/>
            <person name="Lu J."/>
        </authorList>
    </citation>
    <scope>FUNCTION</scope>
    <scope>DISRUPTION PHENOTYPE</scope>
    <scope>SUBCELLULAR LOCATION</scope>
</reference>
<evidence type="ECO:0000250" key="1">
    <source>
        <dbReference type="UniProtKB" id="A0A9P4XWM4"/>
    </source>
</evidence>
<evidence type="ECO:0000255" key="2">
    <source>
        <dbReference type="PROSITE-ProRule" id="PRU00225"/>
    </source>
</evidence>
<evidence type="ECO:0000256" key="3">
    <source>
        <dbReference type="SAM" id="MobiDB-lite"/>
    </source>
</evidence>
<evidence type="ECO:0000269" key="4">
    <source>
    </source>
</evidence>
<evidence type="ECO:0000303" key="5">
    <source>
    </source>
</evidence>
<evidence type="ECO:0000305" key="6"/>
<feature type="chain" id="PRO_0000462151" description="YTH domain-containing family protein 1">
    <location>
        <begin position="1"/>
        <end position="630"/>
    </location>
</feature>
<feature type="domain" description="YTH" evidence="2">
    <location>
        <begin position="382"/>
        <end position="590"/>
    </location>
</feature>
<feature type="region of interest" description="Disordered" evidence="3">
    <location>
        <begin position="38"/>
        <end position="113"/>
    </location>
</feature>
<feature type="region of interest" description="Disordered" evidence="3">
    <location>
        <begin position="160"/>
        <end position="183"/>
    </location>
</feature>
<feature type="region of interest" description="Disordered" evidence="3">
    <location>
        <begin position="200"/>
        <end position="241"/>
    </location>
</feature>
<feature type="compositionally biased region" description="Polar residues" evidence="3">
    <location>
        <begin position="70"/>
        <end position="102"/>
    </location>
</feature>
<proteinExistence type="inferred from homology"/>
<accession>G4MRQ6</accession>